<gene>
    <name type="primary">actr2b</name>
    <name type="synonym">arp2b</name>
    <name type="ORF">si:dkey-66m17.2</name>
    <name type="ORF">zgc:110550</name>
</gene>
<organism>
    <name type="scientific">Danio rerio</name>
    <name type="common">Zebrafish</name>
    <name type="synonym">Brachydanio rerio</name>
    <dbReference type="NCBI Taxonomy" id="7955"/>
    <lineage>
        <taxon>Eukaryota</taxon>
        <taxon>Metazoa</taxon>
        <taxon>Chordata</taxon>
        <taxon>Craniata</taxon>
        <taxon>Vertebrata</taxon>
        <taxon>Euteleostomi</taxon>
        <taxon>Actinopterygii</taxon>
        <taxon>Neopterygii</taxon>
        <taxon>Teleostei</taxon>
        <taxon>Ostariophysi</taxon>
        <taxon>Cypriniformes</taxon>
        <taxon>Danionidae</taxon>
        <taxon>Danioninae</taxon>
        <taxon>Danio</taxon>
    </lineage>
</organism>
<reference key="1">
    <citation type="journal article" date="2013" name="Nature">
        <title>The zebrafish reference genome sequence and its relationship to the human genome.</title>
        <authorList>
            <person name="Howe K."/>
            <person name="Clark M.D."/>
            <person name="Torroja C.F."/>
            <person name="Torrance J."/>
            <person name="Berthelot C."/>
            <person name="Muffato M."/>
            <person name="Collins J.E."/>
            <person name="Humphray S."/>
            <person name="McLaren K."/>
            <person name="Matthews L."/>
            <person name="McLaren S."/>
            <person name="Sealy I."/>
            <person name="Caccamo M."/>
            <person name="Churcher C."/>
            <person name="Scott C."/>
            <person name="Barrett J.C."/>
            <person name="Koch R."/>
            <person name="Rauch G.J."/>
            <person name="White S."/>
            <person name="Chow W."/>
            <person name="Kilian B."/>
            <person name="Quintais L.T."/>
            <person name="Guerra-Assuncao J.A."/>
            <person name="Zhou Y."/>
            <person name="Gu Y."/>
            <person name="Yen J."/>
            <person name="Vogel J.H."/>
            <person name="Eyre T."/>
            <person name="Redmond S."/>
            <person name="Banerjee R."/>
            <person name="Chi J."/>
            <person name="Fu B."/>
            <person name="Langley E."/>
            <person name="Maguire S.F."/>
            <person name="Laird G.K."/>
            <person name="Lloyd D."/>
            <person name="Kenyon E."/>
            <person name="Donaldson S."/>
            <person name="Sehra H."/>
            <person name="Almeida-King J."/>
            <person name="Loveland J."/>
            <person name="Trevanion S."/>
            <person name="Jones M."/>
            <person name="Quail M."/>
            <person name="Willey D."/>
            <person name="Hunt A."/>
            <person name="Burton J."/>
            <person name="Sims S."/>
            <person name="McLay K."/>
            <person name="Plumb B."/>
            <person name="Davis J."/>
            <person name="Clee C."/>
            <person name="Oliver K."/>
            <person name="Clark R."/>
            <person name="Riddle C."/>
            <person name="Elliot D."/>
            <person name="Threadgold G."/>
            <person name="Harden G."/>
            <person name="Ware D."/>
            <person name="Begum S."/>
            <person name="Mortimore B."/>
            <person name="Kerry G."/>
            <person name="Heath P."/>
            <person name="Phillimore B."/>
            <person name="Tracey A."/>
            <person name="Corby N."/>
            <person name="Dunn M."/>
            <person name="Johnson C."/>
            <person name="Wood J."/>
            <person name="Clark S."/>
            <person name="Pelan S."/>
            <person name="Griffiths G."/>
            <person name="Smith M."/>
            <person name="Glithero R."/>
            <person name="Howden P."/>
            <person name="Barker N."/>
            <person name="Lloyd C."/>
            <person name="Stevens C."/>
            <person name="Harley J."/>
            <person name="Holt K."/>
            <person name="Panagiotidis G."/>
            <person name="Lovell J."/>
            <person name="Beasley H."/>
            <person name="Henderson C."/>
            <person name="Gordon D."/>
            <person name="Auger K."/>
            <person name="Wright D."/>
            <person name="Collins J."/>
            <person name="Raisen C."/>
            <person name="Dyer L."/>
            <person name="Leung K."/>
            <person name="Robertson L."/>
            <person name="Ambridge K."/>
            <person name="Leongamornlert D."/>
            <person name="McGuire S."/>
            <person name="Gilderthorp R."/>
            <person name="Griffiths C."/>
            <person name="Manthravadi D."/>
            <person name="Nichol S."/>
            <person name="Barker G."/>
            <person name="Whitehead S."/>
            <person name="Kay M."/>
            <person name="Brown J."/>
            <person name="Murnane C."/>
            <person name="Gray E."/>
            <person name="Humphries M."/>
            <person name="Sycamore N."/>
            <person name="Barker D."/>
            <person name="Saunders D."/>
            <person name="Wallis J."/>
            <person name="Babbage A."/>
            <person name="Hammond S."/>
            <person name="Mashreghi-Mohammadi M."/>
            <person name="Barr L."/>
            <person name="Martin S."/>
            <person name="Wray P."/>
            <person name="Ellington A."/>
            <person name="Matthews N."/>
            <person name="Ellwood M."/>
            <person name="Woodmansey R."/>
            <person name="Clark G."/>
            <person name="Cooper J."/>
            <person name="Tromans A."/>
            <person name="Grafham D."/>
            <person name="Skuce C."/>
            <person name="Pandian R."/>
            <person name="Andrews R."/>
            <person name="Harrison E."/>
            <person name="Kimberley A."/>
            <person name="Garnett J."/>
            <person name="Fosker N."/>
            <person name="Hall R."/>
            <person name="Garner P."/>
            <person name="Kelly D."/>
            <person name="Bird C."/>
            <person name="Palmer S."/>
            <person name="Gehring I."/>
            <person name="Berger A."/>
            <person name="Dooley C.M."/>
            <person name="Ersan-Urun Z."/>
            <person name="Eser C."/>
            <person name="Geiger H."/>
            <person name="Geisler M."/>
            <person name="Karotki L."/>
            <person name="Kirn A."/>
            <person name="Konantz J."/>
            <person name="Konantz M."/>
            <person name="Oberlander M."/>
            <person name="Rudolph-Geiger S."/>
            <person name="Teucke M."/>
            <person name="Lanz C."/>
            <person name="Raddatz G."/>
            <person name="Osoegawa K."/>
            <person name="Zhu B."/>
            <person name="Rapp A."/>
            <person name="Widaa S."/>
            <person name="Langford C."/>
            <person name="Yang F."/>
            <person name="Schuster S.C."/>
            <person name="Carter N.P."/>
            <person name="Harrow J."/>
            <person name="Ning Z."/>
            <person name="Herrero J."/>
            <person name="Searle S.M."/>
            <person name="Enright A."/>
            <person name="Geisler R."/>
            <person name="Plasterk R.H."/>
            <person name="Lee C."/>
            <person name="Westerfield M."/>
            <person name="de Jong P.J."/>
            <person name="Zon L.I."/>
            <person name="Postlethwait J.H."/>
            <person name="Nusslein-Volhard C."/>
            <person name="Hubbard T.J."/>
            <person name="Roest Crollius H."/>
            <person name="Rogers J."/>
            <person name="Stemple D.L."/>
        </authorList>
    </citation>
    <scope>NUCLEOTIDE SEQUENCE [LARGE SCALE GENOMIC DNA]</scope>
    <source>
        <strain>Tuebingen</strain>
    </source>
</reference>
<reference key="2">
    <citation type="submission" date="2007-09" db="EMBL/GenBank/DDBJ databases">
        <authorList>
            <consortium name="NIH - Zebrafish Gene Collection (ZGC) project"/>
        </authorList>
    </citation>
    <scope>NUCLEOTIDE SEQUENCE [LARGE SCALE MRNA]</scope>
    <source>
        <tissue>Embryo</tissue>
        <tissue>Testis</tissue>
    </source>
</reference>
<feature type="chain" id="PRO_0000327248" description="Actin-related protein 2-B">
    <location>
        <begin position="1"/>
        <end position="394"/>
    </location>
</feature>
<feature type="binding site" evidence="1">
    <location>
        <begin position="160"/>
        <end position="162"/>
    </location>
    <ligand>
        <name>ATP</name>
        <dbReference type="ChEBI" id="CHEBI:30616"/>
    </ligand>
</feature>
<feature type="binding site" evidence="1">
    <location>
        <begin position="214"/>
        <end position="218"/>
    </location>
    <ligand>
        <name>ATP</name>
        <dbReference type="ChEBI" id="CHEBI:30616"/>
    </ligand>
</feature>
<feature type="binding site" evidence="1">
    <location>
        <begin position="305"/>
        <end position="310"/>
    </location>
    <ligand>
        <name>ATP</name>
        <dbReference type="ChEBI" id="CHEBI:30616"/>
    </ligand>
</feature>
<accession>Q56A35</accession>
<comment type="function">
    <text evidence="2 3">ATP-binding component of the Arp2/3 complex, a multiprotein complex that mediates actin polymerization upon stimulation by nucleation-promoting factor (NPF) (By similarity). The Arp2/3 complex mediates the formation of branched actin networks in the cytoplasm, providing the force for cell motility (By similarity). Seems to contact the pointed end of the daughter actin filament (By similarity). In addition to its role in the cytoplasmic cytoskeleton, the Arp2/3 complex also promotes actin polymerization in the nucleus, thereby regulating gene transcription and repair of damaged DNA (By similarity). The Arp2/3 complex promotes homologous recombination (HR) repair in response to DNA damage by promoting nuclear actin polymerization, leading to drive motility of double-strand breaks (DSBs) (By similarity).</text>
</comment>
<comment type="subunit">
    <text evidence="3">Component of the Arp2/3 complex composed of actr2/arp2, actr3/arp3, arpc1b, arpc2, arpc3, arpc4 and arpc5.</text>
</comment>
<comment type="subcellular location">
    <subcellularLocation>
        <location evidence="3">Cytoplasm</location>
        <location evidence="3">Cytoskeleton</location>
    </subcellularLocation>
    <subcellularLocation>
        <location evidence="3">Cell projection</location>
    </subcellularLocation>
    <subcellularLocation>
        <location evidence="3">Nucleus</location>
    </subcellularLocation>
</comment>
<comment type="similarity">
    <text evidence="4">Belongs to the actin family. ARP2 subfamily.</text>
</comment>
<sequence>MDSQGRKVVVCDNGTGFVKCGYAGSNFPEHIFPALVGRPIIRSTAKVGNIEIKDLMVGDEASELRSMLEVNYPMENGIVRNWDDMKHLWDYTFGPEKLNINSRDCKILLTEPPMNPTKNREKIIEVMFETYQFTGVYIAIQAVLTLYAQGLLTGVVVDSGDGVTHICPVYEGFSLPHLTRRLDIAGRDITRYLIKLLLLRGYAFNHSADFETVRMMKENLCYVGYNIEQEQKLALETTVLVESYTLPDGRVIKVGGERFEAPEALFQPHLINVEGVGVAELLFNTIQAADIDTRAEFYKHIVLSGGSTMYPGLPSRLERELKQLYLERVLKGDVDKLSKFKIRIEDPPRRKHMVFLGGAVLADIMKDKDNFWLTREEYQEKGVRVLEKLGVTVR</sequence>
<protein>
    <recommendedName>
        <fullName>Actin-related protein 2-B</fullName>
    </recommendedName>
    <alternativeName>
        <fullName>Actin-like protein 2-B</fullName>
    </alternativeName>
</protein>
<dbReference type="EMBL" id="BX629343">
    <property type="protein sequence ID" value="CAN88750.1"/>
    <property type="molecule type" value="Genomic_DNA"/>
</dbReference>
<dbReference type="EMBL" id="BC092187">
    <property type="protein sequence ID" value="AAH92187.1"/>
    <property type="molecule type" value="mRNA"/>
</dbReference>
<dbReference type="EMBL" id="BC153558">
    <property type="protein sequence ID" value="AAI53559.1"/>
    <property type="molecule type" value="mRNA"/>
</dbReference>
<dbReference type="RefSeq" id="NP_001017542.1">
    <property type="nucleotide sequence ID" value="NM_001017542.2"/>
</dbReference>
<dbReference type="RefSeq" id="XP_005169567.1">
    <property type="nucleotide sequence ID" value="XM_005169510.5"/>
</dbReference>
<dbReference type="SMR" id="Q56A35"/>
<dbReference type="FunCoup" id="Q56A35">
    <property type="interactions" value="3565"/>
</dbReference>
<dbReference type="STRING" id="7955.ENSDARP00000093331"/>
<dbReference type="PaxDb" id="7955-ENSDARP00000093331"/>
<dbReference type="Ensembl" id="ENSDART00000102555">
    <property type="protein sequence ID" value="ENSDARP00000093331"/>
    <property type="gene ID" value="ENSDARG00000070076"/>
</dbReference>
<dbReference type="GeneID" id="554861"/>
<dbReference type="KEGG" id="dre:554861"/>
<dbReference type="AGR" id="ZFIN:ZDB-GENE-050410-4"/>
<dbReference type="CTD" id="554861"/>
<dbReference type="ZFIN" id="ZDB-GENE-050410-4">
    <property type="gene designation" value="actr2b"/>
</dbReference>
<dbReference type="eggNOG" id="KOG0677">
    <property type="taxonomic scope" value="Eukaryota"/>
</dbReference>
<dbReference type="HOGENOM" id="CLU_027965_0_0_1"/>
<dbReference type="InParanoid" id="Q56A35"/>
<dbReference type="OMA" id="VDPRSCK"/>
<dbReference type="OrthoDB" id="10251209at2759"/>
<dbReference type="PhylomeDB" id="Q56A35"/>
<dbReference type="TreeFam" id="TF300467"/>
<dbReference type="Reactome" id="R-DRE-2029482">
    <property type="pathway name" value="Regulation of actin dynamics for phagocytic cup formation"/>
</dbReference>
<dbReference type="Reactome" id="R-DRE-3928662">
    <property type="pathway name" value="EPHB-mediated forward signaling"/>
</dbReference>
<dbReference type="Reactome" id="R-DRE-5663213">
    <property type="pathway name" value="RHO GTPases Activate WASPs and WAVEs"/>
</dbReference>
<dbReference type="Reactome" id="R-DRE-6798695">
    <property type="pathway name" value="Neutrophil degranulation"/>
</dbReference>
<dbReference type="PRO" id="PR:Q56A35"/>
<dbReference type="Proteomes" id="UP000000437">
    <property type="component" value="Chromosome 13"/>
</dbReference>
<dbReference type="Bgee" id="ENSDARG00000070076">
    <property type="expression patterns" value="Expressed in granulocyte and 20 other cell types or tissues"/>
</dbReference>
<dbReference type="ExpressionAtlas" id="Q56A35">
    <property type="expression patterns" value="baseline and differential"/>
</dbReference>
<dbReference type="GO" id="GO:0005885">
    <property type="term" value="C:Arp2/3 protein complex"/>
    <property type="evidence" value="ECO:0000250"/>
    <property type="project" value="UniProtKB"/>
</dbReference>
<dbReference type="GO" id="GO:0005938">
    <property type="term" value="C:cell cortex"/>
    <property type="evidence" value="ECO:0000318"/>
    <property type="project" value="GO_Central"/>
</dbReference>
<dbReference type="GO" id="GO:0042995">
    <property type="term" value="C:cell projection"/>
    <property type="evidence" value="ECO:0007669"/>
    <property type="project" value="UniProtKB-SubCell"/>
</dbReference>
<dbReference type="GO" id="GO:0005737">
    <property type="term" value="C:cytoplasm"/>
    <property type="evidence" value="ECO:0000250"/>
    <property type="project" value="UniProtKB"/>
</dbReference>
<dbReference type="GO" id="GO:0005634">
    <property type="term" value="C:nucleus"/>
    <property type="evidence" value="ECO:0000250"/>
    <property type="project" value="UniProtKB"/>
</dbReference>
<dbReference type="GO" id="GO:0035861">
    <property type="term" value="C:site of double-strand break"/>
    <property type="evidence" value="ECO:0000250"/>
    <property type="project" value="UniProtKB"/>
</dbReference>
<dbReference type="GO" id="GO:0003779">
    <property type="term" value="F:actin binding"/>
    <property type="evidence" value="ECO:0007669"/>
    <property type="project" value="UniProtKB-KW"/>
</dbReference>
<dbReference type="GO" id="GO:0005524">
    <property type="term" value="F:ATP binding"/>
    <property type="evidence" value="ECO:0007669"/>
    <property type="project" value="UniProtKB-KW"/>
</dbReference>
<dbReference type="GO" id="GO:0034314">
    <property type="term" value="P:Arp2/3 complex-mediated actin nucleation"/>
    <property type="evidence" value="ECO:0000250"/>
    <property type="project" value="UniProtKB"/>
</dbReference>
<dbReference type="GO" id="GO:1905168">
    <property type="term" value="P:positive regulation of double-strand break repair via homologous recombination"/>
    <property type="evidence" value="ECO:0000250"/>
    <property type="project" value="UniProtKB"/>
</dbReference>
<dbReference type="GO" id="GO:0045944">
    <property type="term" value="P:positive regulation of transcription by RNA polymerase II"/>
    <property type="evidence" value="ECO:0000250"/>
    <property type="project" value="UniProtKB"/>
</dbReference>
<dbReference type="GO" id="GO:0060319">
    <property type="term" value="P:primitive erythrocyte differentiation"/>
    <property type="evidence" value="ECO:0000315"/>
    <property type="project" value="ZFIN"/>
</dbReference>
<dbReference type="CDD" id="cd10220">
    <property type="entry name" value="ASKHA_NBD_Arp2"/>
    <property type="match status" value="1"/>
</dbReference>
<dbReference type="FunFam" id="3.30.420.40:FF:000538">
    <property type="entry name" value="Actin-related protein 2"/>
    <property type="match status" value="1"/>
</dbReference>
<dbReference type="FunFam" id="3.90.640.10:FF:000005">
    <property type="entry name" value="Actin-related protein 2"/>
    <property type="match status" value="1"/>
</dbReference>
<dbReference type="Gene3D" id="3.30.420.40">
    <property type="match status" value="2"/>
</dbReference>
<dbReference type="Gene3D" id="3.90.640.10">
    <property type="entry name" value="Actin, Chain A, domain 4"/>
    <property type="match status" value="1"/>
</dbReference>
<dbReference type="InterPro" id="IPR004000">
    <property type="entry name" value="Actin"/>
</dbReference>
<dbReference type="InterPro" id="IPR020902">
    <property type="entry name" value="Actin/actin-like_CS"/>
</dbReference>
<dbReference type="InterPro" id="IPR043129">
    <property type="entry name" value="ATPase_NBD"/>
</dbReference>
<dbReference type="PANTHER" id="PTHR11937">
    <property type="entry name" value="ACTIN"/>
    <property type="match status" value="1"/>
</dbReference>
<dbReference type="Pfam" id="PF00022">
    <property type="entry name" value="Actin"/>
    <property type="match status" value="1"/>
</dbReference>
<dbReference type="PRINTS" id="PR00190">
    <property type="entry name" value="ACTIN"/>
</dbReference>
<dbReference type="SMART" id="SM00268">
    <property type="entry name" value="ACTIN"/>
    <property type="match status" value="1"/>
</dbReference>
<dbReference type="SUPFAM" id="SSF53067">
    <property type="entry name" value="Actin-like ATPase domain"/>
    <property type="match status" value="2"/>
</dbReference>
<dbReference type="PROSITE" id="PS01132">
    <property type="entry name" value="ACTINS_ACT_LIKE"/>
    <property type="match status" value="1"/>
</dbReference>
<evidence type="ECO:0000250" key="1">
    <source>
        <dbReference type="UniProtKB" id="A7MB62"/>
    </source>
</evidence>
<evidence type="ECO:0000250" key="2">
    <source>
        <dbReference type="UniProtKB" id="P61160"/>
    </source>
</evidence>
<evidence type="ECO:0000250" key="3">
    <source>
        <dbReference type="UniProtKB" id="Q7ZTP2"/>
    </source>
</evidence>
<evidence type="ECO:0000305" key="4"/>
<keyword id="KW-0009">Actin-binding</keyword>
<keyword id="KW-0067">ATP-binding</keyword>
<keyword id="KW-0966">Cell projection</keyword>
<keyword id="KW-0963">Cytoplasm</keyword>
<keyword id="KW-0206">Cytoskeleton</keyword>
<keyword id="KW-0547">Nucleotide-binding</keyword>
<keyword id="KW-0539">Nucleus</keyword>
<keyword id="KW-1185">Reference proteome</keyword>
<name>ARP2B_DANRE</name>
<proteinExistence type="evidence at transcript level"/>